<organism>
    <name type="scientific">Bradyrhizobium sp. (strain BTAi1 / ATCC BAA-1182)</name>
    <dbReference type="NCBI Taxonomy" id="288000"/>
    <lineage>
        <taxon>Bacteria</taxon>
        <taxon>Pseudomonadati</taxon>
        <taxon>Pseudomonadota</taxon>
        <taxon>Alphaproteobacteria</taxon>
        <taxon>Hyphomicrobiales</taxon>
        <taxon>Nitrobacteraceae</taxon>
        <taxon>Bradyrhizobium</taxon>
    </lineage>
</organism>
<protein>
    <recommendedName>
        <fullName evidence="1">GTPase Era</fullName>
    </recommendedName>
</protein>
<accession>A5EKL6</accession>
<keyword id="KW-0997">Cell inner membrane</keyword>
<keyword id="KW-1003">Cell membrane</keyword>
<keyword id="KW-0963">Cytoplasm</keyword>
<keyword id="KW-0342">GTP-binding</keyword>
<keyword id="KW-0472">Membrane</keyword>
<keyword id="KW-0547">Nucleotide-binding</keyword>
<keyword id="KW-1185">Reference proteome</keyword>
<keyword id="KW-0690">Ribosome biogenesis</keyword>
<keyword id="KW-0694">RNA-binding</keyword>
<keyword id="KW-0699">rRNA-binding</keyword>
<feature type="chain" id="PRO_1000079659" description="GTPase Era">
    <location>
        <begin position="1"/>
        <end position="308"/>
    </location>
</feature>
<feature type="domain" description="Era-type G" evidence="2">
    <location>
        <begin position="14"/>
        <end position="181"/>
    </location>
</feature>
<feature type="domain" description="KH type-2" evidence="1">
    <location>
        <begin position="212"/>
        <end position="289"/>
    </location>
</feature>
<feature type="region of interest" description="G1" evidence="2">
    <location>
        <begin position="22"/>
        <end position="29"/>
    </location>
</feature>
<feature type="region of interest" description="G2" evidence="2">
    <location>
        <begin position="48"/>
        <end position="52"/>
    </location>
</feature>
<feature type="region of interest" description="G3" evidence="2">
    <location>
        <begin position="69"/>
        <end position="72"/>
    </location>
</feature>
<feature type="region of interest" description="G4" evidence="2">
    <location>
        <begin position="131"/>
        <end position="134"/>
    </location>
</feature>
<feature type="region of interest" description="G5" evidence="2">
    <location>
        <begin position="160"/>
        <end position="162"/>
    </location>
</feature>
<feature type="binding site" evidence="1">
    <location>
        <begin position="22"/>
        <end position="29"/>
    </location>
    <ligand>
        <name>GTP</name>
        <dbReference type="ChEBI" id="CHEBI:37565"/>
    </ligand>
</feature>
<feature type="binding site" evidence="1">
    <location>
        <begin position="69"/>
        <end position="73"/>
    </location>
    <ligand>
        <name>GTP</name>
        <dbReference type="ChEBI" id="CHEBI:37565"/>
    </ligand>
</feature>
<feature type="binding site" evidence="1">
    <location>
        <begin position="131"/>
        <end position="134"/>
    </location>
    <ligand>
        <name>GTP</name>
        <dbReference type="ChEBI" id="CHEBI:37565"/>
    </ligand>
</feature>
<gene>
    <name evidence="1" type="primary">era</name>
    <name type="ordered locus">BBta_4682</name>
</gene>
<comment type="function">
    <text evidence="1">An essential GTPase that binds both GDP and GTP, with rapid nucleotide exchange. Plays a role in 16S rRNA processing and 30S ribosomal subunit biogenesis and possibly also in cell cycle regulation and energy metabolism.</text>
</comment>
<comment type="subunit">
    <text evidence="1">Monomer.</text>
</comment>
<comment type="subcellular location">
    <subcellularLocation>
        <location>Cytoplasm</location>
    </subcellularLocation>
    <subcellularLocation>
        <location evidence="1">Cell inner membrane</location>
        <topology evidence="1">Peripheral membrane protein</topology>
    </subcellularLocation>
</comment>
<comment type="similarity">
    <text evidence="1 2">Belongs to the TRAFAC class TrmE-Era-EngA-EngB-Septin-like GTPase superfamily. Era GTPase family.</text>
</comment>
<reference key="1">
    <citation type="journal article" date="2007" name="Science">
        <title>Legumes symbioses: absence of nod genes in photosynthetic bradyrhizobia.</title>
        <authorList>
            <person name="Giraud E."/>
            <person name="Moulin L."/>
            <person name="Vallenet D."/>
            <person name="Barbe V."/>
            <person name="Cytryn E."/>
            <person name="Avarre J.-C."/>
            <person name="Jaubert M."/>
            <person name="Simon D."/>
            <person name="Cartieaux F."/>
            <person name="Prin Y."/>
            <person name="Bena G."/>
            <person name="Hannibal L."/>
            <person name="Fardoux J."/>
            <person name="Kojadinovic M."/>
            <person name="Vuillet L."/>
            <person name="Lajus A."/>
            <person name="Cruveiller S."/>
            <person name="Rouy Z."/>
            <person name="Mangenot S."/>
            <person name="Segurens B."/>
            <person name="Dossat C."/>
            <person name="Franck W.L."/>
            <person name="Chang W.-S."/>
            <person name="Saunders E."/>
            <person name="Bruce D."/>
            <person name="Richardson P."/>
            <person name="Normand P."/>
            <person name="Dreyfus B."/>
            <person name="Pignol D."/>
            <person name="Stacey G."/>
            <person name="Emerich D."/>
            <person name="Vermeglio A."/>
            <person name="Medigue C."/>
            <person name="Sadowsky M."/>
        </authorList>
    </citation>
    <scope>NUCLEOTIDE SEQUENCE [LARGE SCALE GENOMIC DNA]</scope>
    <source>
        <strain>BTAi1 / ATCC BAA-1182</strain>
    </source>
</reference>
<proteinExistence type="inferred from homology"/>
<name>ERA_BRASB</name>
<dbReference type="EMBL" id="CP000494">
    <property type="protein sequence ID" value="ABQ36710.1"/>
    <property type="molecule type" value="Genomic_DNA"/>
</dbReference>
<dbReference type="RefSeq" id="WP_012044697.1">
    <property type="nucleotide sequence ID" value="NC_009485.1"/>
</dbReference>
<dbReference type="SMR" id="A5EKL6"/>
<dbReference type="STRING" id="288000.BBta_4682"/>
<dbReference type="KEGG" id="bbt:BBta_4682"/>
<dbReference type="eggNOG" id="COG1159">
    <property type="taxonomic scope" value="Bacteria"/>
</dbReference>
<dbReference type="HOGENOM" id="CLU_038009_1_1_5"/>
<dbReference type="OrthoDB" id="9805918at2"/>
<dbReference type="Proteomes" id="UP000000246">
    <property type="component" value="Chromosome"/>
</dbReference>
<dbReference type="GO" id="GO:0005829">
    <property type="term" value="C:cytosol"/>
    <property type="evidence" value="ECO:0007669"/>
    <property type="project" value="TreeGrafter"/>
</dbReference>
<dbReference type="GO" id="GO:0005886">
    <property type="term" value="C:plasma membrane"/>
    <property type="evidence" value="ECO:0007669"/>
    <property type="project" value="UniProtKB-SubCell"/>
</dbReference>
<dbReference type="GO" id="GO:0005525">
    <property type="term" value="F:GTP binding"/>
    <property type="evidence" value="ECO:0007669"/>
    <property type="project" value="UniProtKB-UniRule"/>
</dbReference>
<dbReference type="GO" id="GO:0003924">
    <property type="term" value="F:GTPase activity"/>
    <property type="evidence" value="ECO:0007669"/>
    <property type="project" value="UniProtKB-UniRule"/>
</dbReference>
<dbReference type="GO" id="GO:0043024">
    <property type="term" value="F:ribosomal small subunit binding"/>
    <property type="evidence" value="ECO:0007669"/>
    <property type="project" value="TreeGrafter"/>
</dbReference>
<dbReference type="GO" id="GO:0070181">
    <property type="term" value="F:small ribosomal subunit rRNA binding"/>
    <property type="evidence" value="ECO:0007669"/>
    <property type="project" value="UniProtKB-UniRule"/>
</dbReference>
<dbReference type="GO" id="GO:0000028">
    <property type="term" value="P:ribosomal small subunit assembly"/>
    <property type="evidence" value="ECO:0007669"/>
    <property type="project" value="TreeGrafter"/>
</dbReference>
<dbReference type="CDD" id="cd04163">
    <property type="entry name" value="Era"/>
    <property type="match status" value="1"/>
</dbReference>
<dbReference type="CDD" id="cd22534">
    <property type="entry name" value="KH-II_Era"/>
    <property type="match status" value="1"/>
</dbReference>
<dbReference type="FunFam" id="3.40.50.300:FF:001190">
    <property type="entry name" value="GTP-binding protein ERG"/>
    <property type="match status" value="1"/>
</dbReference>
<dbReference type="FunFam" id="3.30.300.20:FF:000031">
    <property type="entry name" value="GTPase Era"/>
    <property type="match status" value="1"/>
</dbReference>
<dbReference type="Gene3D" id="3.30.300.20">
    <property type="match status" value="1"/>
</dbReference>
<dbReference type="Gene3D" id="3.40.50.300">
    <property type="entry name" value="P-loop containing nucleotide triphosphate hydrolases"/>
    <property type="match status" value="1"/>
</dbReference>
<dbReference type="HAMAP" id="MF_00367">
    <property type="entry name" value="GTPase_Era"/>
    <property type="match status" value="1"/>
</dbReference>
<dbReference type="InterPro" id="IPR030388">
    <property type="entry name" value="G_ERA_dom"/>
</dbReference>
<dbReference type="InterPro" id="IPR006073">
    <property type="entry name" value="GTP-bd"/>
</dbReference>
<dbReference type="InterPro" id="IPR005662">
    <property type="entry name" value="GTPase_Era-like"/>
</dbReference>
<dbReference type="InterPro" id="IPR015946">
    <property type="entry name" value="KH_dom-like_a/b"/>
</dbReference>
<dbReference type="InterPro" id="IPR004044">
    <property type="entry name" value="KH_dom_type_2"/>
</dbReference>
<dbReference type="InterPro" id="IPR009019">
    <property type="entry name" value="KH_sf_prok-type"/>
</dbReference>
<dbReference type="InterPro" id="IPR027417">
    <property type="entry name" value="P-loop_NTPase"/>
</dbReference>
<dbReference type="InterPro" id="IPR005225">
    <property type="entry name" value="Small_GTP-bd"/>
</dbReference>
<dbReference type="NCBIfam" id="TIGR00436">
    <property type="entry name" value="era"/>
    <property type="match status" value="1"/>
</dbReference>
<dbReference type="NCBIfam" id="NF000908">
    <property type="entry name" value="PRK00089.1"/>
    <property type="match status" value="1"/>
</dbReference>
<dbReference type="NCBIfam" id="TIGR00231">
    <property type="entry name" value="small_GTP"/>
    <property type="match status" value="1"/>
</dbReference>
<dbReference type="PANTHER" id="PTHR42698">
    <property type="entry name" value="GTPASE ERA"/>
    <property type="match status" value="1"/>
</dbReference>
<dbReference type="PANTHER" id="PTHR42698:SF1">
    <property type="entry name" value="GTPASE ERA, MITOCHONDRIAL"/>
    <property type="match status" value="1"/>
</dbReference>
<dbReference type="Pfam" id="PF07650">
    <property type="entry name" value="KH_2"/>
    <property type="match status" value="1"/>
</dbReference>
<dbReference type="Pfam" id="PF01926">
    <property type="entry name" value="MMR_HSR1"/>
    <property type="match status" value="1"/>
</dbReference>
<dbReference type="SUPFAM" id="SSF52540">
    <property type="entry name" value="P-loop containing nucleoside triphosphate hydrolases"/>
    <property type="match status" value="1"/>
</dbReference>
<dbReference type="SUPFAM" id="SSF54814">
    <property type="entry name" value="Prokaryotic type KH domain (KH-domain type II)"/>
    <property type="match status" value="1"/>
</dbReference>
<dbReference type="PROSITE" id="PS51713">
    <property type="entry name" value="G_ERA"/>
    <property type="match status" value="1"/>
</dbReference>
<dbReference type="PROSITE" id="PS50823">
    <property type="entry name" value="KH_TYPE_2"/>
    <property type="match status" value="1"/>
</dbReference>
<sequence length="308" mass="33706">MTAEQHAGPGAETRCGFVALIGAPNVGKSTLVNALVGSKVTIVSRKVQTTRALIRGIVIEGTSQIILVDTPGIFSPKRRLDRAMVTTAWSGAHDADLVCVLLDAKKGLDDEAQAIIDKAAAVAHQKILVVNKVDLVPREKLLALVAAANEKLPFARTFMISALSGDGVDDLKQALAAMVPPGPFHYPEDQMSDAPMRHLAAEITREKIYSHLHQELPYQSTVETDSWTERKDGSIRIEQTIFVERDSQRKIVLGKGGATIKSIGAQSRKEIAEITGVPVHLFLFVKVRENWGDDPDRYREMGLEFPRE</sequence>
<evidence type="ECO:0000255" key="1">
    <source>
        <dbReference type="HAMAP-Rule" id="MF_00367"/>
    </source>
</evidence>
<evidence type="ECO:0000255" key="2">
    <source>
        <dbReference type="PROSITE-ProRule" id="PRU01050"/>
    </source>
</evidence>